<evidence type="ECO:0000255" key="1">
    <source>
        <dbReference type="HAMAP-Rule" id="MF_00059"/>
    </source>
</evidence>
<reference key="1">
    <citation type="journal article" date="2011" name="J. Bacteriol.">
        <title>Complete genome sequence and updated annotation of Desulfovibrio alaskensis G20.</title>
        <authorList>
            <person name="Hauser L.J."/>
            <person name="Land M.L."/>
            <person name="Brown S.D."/>
            <person name="Larimer F."/>
            <person name="Keller K.L."/>
            <person name="Rapp-Giles B.J."/>
            <person name="Price M.N."/>
            <person name="Lin M."/>
            <person name="Bruce D.C."/>
            <person name="Detter J.C."/>
            <person name="Tapia R."/>
            <person name="Han C.S."/>
            <person name="Goodwin L.A."/>
            <person name="Cheng J.F."/>
            <person name="Pitluck S."/>
            <person name="Copeland A."/>
            <person name="Lucas S."/>
            <person name="Nolan M."/>
            <person name="Lapidus A.L."/>
            <person name="Palumbo A.V."/>
            <person name="Wall J.D."/>
        </authorList>
    </citation>
    <scope>NUCLEOTIDE SEQUENCE [LARGE SCALE GENOMIC DNA]</scope>
    <source>
        <strain>ATCC BAA-1058 / DSM 17464 / G20</strain>
    </source>
</reference>
<dbReference type="EC" id="2.7.7.6" evidence="1"/>
<dbReference type="EMBL" id="CP000112">
    <property type="protein sequence ID" value="ABB39028.1"/>
    <property type="molecule type" value="Genomic_DNA"/>
</dbReference>
<dbReference type="RefSeq" id="WP_011368119.1">
    <property type="nucleotide sequence ID" value="NC_007519.1"/>
</dbReference>
<dbReference type="SMR" id="Q30Z68"/>
<dbReference type="STRING" id="207559.Dde_2231"/>
<dbReference type="KEGG" id="dde:Dde_2231"/>
<dbReference type="eggNOG" id="COG0202">
    <property type="taxonomic scope" value="Bacteria"/>
</dbReference>
<dbReference type="HOGENOM" id="CLU_053084_0_1_7"/>
<dbReference type="Proteomes" id="UP000002710">
    <property type="component" value="Chromosome"/>
</dbReference>
<dbReference type="GO" id="GO:0005737">
    <property type="term" value="C:cytoplasm"/>
    <property type="evidence" value="ECO:0007669"/>
    <property type="project" value="UniProtKB-ARBA"/>
</dbReference>
<dbReference type="GO" id="GO:0000428">
    <property type="term" value="C:DNA-directed RNA polymerase complex"/>
    <property type="evidence" value="ECO:0007669"/>
    <property type="project" value="UniProtKB-KW"/>
</dbReference>
<dbReference type="GO" id="GO:0003677">
    <property type="term" value="F:DNA binding"/>
    <property type="evidence" value="ECO:0007669"/>
    <property type="project" value="UniProtKB-UniRule"/>
</dbReference>
<dbReference type="GO" id="GO:0003899">
    <property type="term" value="F:DNA-directed RNA polymerase activity"/>
    <property type="evidence" value="ECO:0007669"/>
    <property type="project" value="UniProtKB-UniRule"/>
</dbReference>
<dbReference type="GO" id="GO:0046983">
    <property type="term" value="F:protein dimerization activity"/>
    <property type="evidence" value="ECO:0007669"/>
    <property type="project" value="InterPro"/>
</dbReference>
<dbReference type="GO" id="GO:0006351">
    <property type="term" value="P:DNA-templated transcription"/>
    <property type="evidence" value="ECO:0007669"/>
    <property type="project" value="UniProtKB-UniRule"/>
</dbReference>
<dbReference type="CDD" id="cd06928">
    <property type="entry name" value="RNAP_alpha_NTD"/>
    <property type="match status" value="1"/>
</dbReference>
<dbReference type="FunFam" id="2.170.120.12:FF:000001">
    <property type="entry name" value="DNA-directed RNA polymerase subunit alpha"/>
    <property type="match status" value="1"/>
</dbReference>
<dbReference type="Gene3D" id="1.10.150.20">
    <property type="entry name" value="5' to 3' exonuclease, C-terminal subdomain"/>
    <property type="match status" value="1"/>
</dbReference>
<dbReference type="Gene3D" id="2.170.120.12">
    <property type="entry name" value="DNA-directed RNA polymerase, insert domain"/>
    <property type="match status" value="1"/>
</dbReference>
<dbReference type="Gene3D" id="3.30.1360.10">
    <property type="entry name" value="RNA polymerase, RBP11-like subunit"/>
    <property type="match status" value="1"/>
</dbReference>
<dbReference type="HAMAP" id="MF_00059">
    <property type="entry name" value="RNApol_bact_RpoA"/>
    <property type="match status" value="1"/>
</dbReference>
<dbReference type="InterPro" id="IPR011262">
    <property type="entry name" value="DNA-dir_RNA_pol_insert"/>
</dbReference>
<dbReference type="InterPro" id="IPR011263">
    <property type="entry name" value="DNA-dir_RNA_pol_RpoA/D/Rpb3"/>
</dbReference>
<dbReference type="InterPro" id="IPR011773">
    <property type="entry name" value="DNA-dir_RpoA"/>
</dbReference>
<dbReference type="InterPro" id="IPR036603">
    <property type="entry name" value="RBP11-like"/>
</dbReference>
<dbReference type="InterPro" id="IPR011260">
    <property type="entry name" value="RNAP_asu_C"/>
</dbReference>
<dbReference type="InterPro" id="IPR036643">
    <property type="entry name" value="RNApol_insert_sf"/>
</dbReference>
<dbReference type="NCBIfam" id="NF003513">
    <property type="entry name" value="PRK05182.1-2"/>
    <property type="match status" value="1"/>
</dbReference>
<dbReference type="NCBIfam" id="NF003519">
    <property type="entry name" value="PRK05182.2-5"/>
    <property type="match status" value="1"/>
</dbReference>
<dbReference type="NCBIfam" id="TIGR02027">
    <property type="entry name" value="rpoA"/>
    <property type="match status" value="1"/>
</dbReference>
<dbReference type="Pfam" id="PF01000">
    <property type="entry name" value="RNA_pol_A_bac"/>
    <property type="match status" value="1"/>
</dbReference>
<dbReference type="Pfam" id="PF03118">
    <property type="entry name" value="RNA_pol_A_CTD"/>
    <property type="match status" value="1"/>
</dbReference>
<dbReference type="Pfam" id="PF01193">
    <property type="entry name" value="RNA_pol_L"/>
    <property type="match status" value="1"/>
</dbReference>
<dbReference type="SMART" id="SM00662">
    <property type="entry name" value="RPOLD"/>
    <property type="match status" value="1"/>
</dbReference>
<dbReference type="SUPFAM" id="SSF47789">
    <property type="entry name" value="C-terminal domain of RNA polymerase alpha subunit"/>
    <property type="match status" value="1"/>
</dbReference>
<dbReference type="SUPFAM" id="SSF56553">
    <property type="entry name" value="Insert subdomain of RNA polymerase alpha subunit"/>
    <property type="match status" value="1"/>
</dbReference>
<dbReference type="SUPFAM" id="SSF55257">
    <property type="entry name" value="RBP11-like subunits of RNA polymerase"/>
    <property type="match status" value="1"/>
</dbReference>
<keyword id="KW-0240">DNA-directed RNA polymerase</keyword>
<keyword id="KW-0548">Nucleotidyltransferase</keyword>
<keyword id="KW-1185">Reference proteome</keyword>
<keyword id="KW-0804">Transcription</keyword>
<keyword id="KW-0808">Transferase</keyword>
<protein>
    <recommendedName>
        <fullName evidence="1">DNA-directed RNA polymerase subunit alpha</fullName>
        <shortName evidence="1">RNAP subunit alpha</shortName>
        <ecNumber evidence="1">2.7.7.6</ecNumber>
    </recommendedName>
    <alternativeName>
        <fullName evidence="1">RNA polymerase subunit alpha</fullName>
    </alternativeName>
    <alternativeName>
        <fullName evidence="1">Transcriptase subunit alpha</fullName>
    </alternativeName>
</protein>
<proteinExistence type="inferred from homology"/>
<accession>Q30Z68</accession>
<gene>
    <name evidence="1" type="primary">rpoA</name>
    <name type="ordered locus">Dde_2231</name>
</gene>
<comment type="function">
    <text evidence="1">DNA-dependent RNA polymerase catalyzes the transcription of DNA into RNA using the four ribonucleoside triphosphates as substrates.</text>
</comment>
<comment type="catalytic activity">
    <reaction evidence="1">
        <text>RNA(n) + a ribonucleoside 5'-triphosphate = RNA(n+1) + diphosphate</text>
        <dbReference type="Rhea" id="RHEA:21248"/>
        <dbReference type="Rhea" id="RHEA-COMP:14527"/>
        <dbReference type="Rhea" id="RHEA-COMP:17342"/>
        <dbReference type="ChEBI" id="CHEBI:33019"/>
        <dbReference type="ChEBI" id="CHEBI:61557"/>
        <dbReference type="ChEBI" id="CHEBI:140395"/>
        <dbReference type="EC" id="2.7.7.6"/>
    </reaction>
</comment>
<comment type="subunit">
    <text evidence="1">Homodimer. The RNAP catalytic core consists of 2 alpha, 1 beta, 1 beta' and 1 omega subunit. When a sigma factor is associated with the core the holoenzyme is formed, which can initiate transcription.</text>
</comment>
<comment type="domain">
    <text evidence="1">The N-terminal domain is essential for RNAP assembly and basal transcription, whereas the C-terminal domain is involved in interaction with transcriptional regulators and with upstream promoter elements.</text>
</comment>
<comment type="similarity">
    <text evidence="1">Belongs to the RNA polymerase alpha chain family.</text>
</comment>
<name>RPOA_OLEA2</name>
<sequence>MLIKQGDRLINTRNWSELVKPDQISRASESADTMYGKFVCEPLERGYGTTIGNAMRRVLLASLQGAAFVAVKISGVQHEFTTIPGVLEDVTDIVLNLKQVRLAMDTEEPQHLELHVNKSGEVKAGDIKCNQHVMVLNADQHLMTLTEDVELTFELEVRMGKGYVPADMHEGLSDEIGLIALDASFSPVRKVAYTVEQARVGQMTNYDKLILEVWTDGSISPEDAIAYSAKIIKDQISVFINFDERISEQENEGRSSASDVNENLFKGIDELELSVRATNCLKSANISLVGELVQKSEGEMLKTKNFGRKSLDEIRRVLGEMSLDFGMKVDGFEKKYQEWLKRKQQNEA</sequence>
<feature type="chain" id="PRO_0000225272" description="DNA-directed RNA polymerase subunit alpha">
    <location>
        <begin position="1"/>
        <end position="348"/>
    </location>
</feature>
<feature type="region of interest" description="Alpha N-terminal domain (alpha-NTD)" evidence="1">
    <location>
        <begin position="1"/>
        <end position="243"/>
    </location>
</feature>
<feature type="region of interest" description="Alpha C-terminal domain (alpha-CTD)" evidence="1">
    <location>
        <begin position="260"/>
        <end position="348"/>
    </location>
</feature>
<organism>
    <name type="scientific">Oleidesulfovibrio alaskensis (strain ATCC BAA-1058 / DSM 17464 / G20)</name>
    <name type="common">Desulfovibrio alaskensis</name>
    <dbReference type="NCBI Taxonomy" id="207559"/>
    <lineage>
        <taxon>Bacteria</taxon>
        <taxon>Pseudomonadati</taxon>
        <taxon>Thermodesulfobacteriota</taxon>
        <taxon>Desulfovibrionia</taxon>
        <taxon>Desulfovibrionales</taxon>
        <taxon>Desulfovibrionaceae</taxon>
        <taxon>Oleidesulfovibrio</taxon>
    </lineage>
</organism>